<gene>
    <name type="primary">hoxc4a</name>
</gene>
<evidence type="ECO:0000250" key="1"/>
<evidence type="ECO:0000255" key="2">
    <source>
        <dbReference type="PROSITE-ProRule" id="PRU00108"/>
    </source>
</evidence>
<evidence type="ECO:0000256" key="3">
    <source>
        <dbReference type="SAM" id="MobiDB-lite"/>
    </source>
</evidence>
<evidence type="ECO:0000305" key="4"/>
<accession>Q1KKU6</accession>
<organism>
    <name type="scientific">Takifugu rubripes</name>
    <name type="common">Japanese pufferfish</name>
    <name type="synonym">Fugu rubripes</name>
    <dbReference type="NCBI Taxonomy" id="31033"/>
    <lineage>
        <taxon>Eukaryota</taxon>
        <taxon>Metazoa</taxon>
        <taxon>Chordata</taxon>
        <taxon>Craniata</taxon>
        <taxon>Vertebrata</taxon>
        <taxon>Euteleostomi</taxon>
        <taxon>Actinopterygii</taxon>
        <taxon>Neopterygii</taxon>
        <taxon>Teleostei</taxon>
        <taxon>Neoteleostei</taxon>
        <taxon>Acanthomorphata</taxon>
        <taxon>Eupercaria</taxon>
        <taxon>Tetraodontiformes</taxon>
        <taxon>Tetradontoidea</taxon>
        <taxon>Tetraodontidae</taxon>
        <taxon>Takifugu</taxon>
    </lineage>
</organism>
<protein>
    <recommendedName>
        <fullName>Homeobox protein Hox-C4a</fullName>
    </recommendedName>
</protein>
<dbReference type="EMBL" id="DQ481667">
    <property type="protein sequence ID" value="ABF22448.1"/>
    <property type="molecule type" value="Genomic_DNA"/>
</dbReference>
<dbReference type="SMR" id="Q1KKU6"/>
<dbReference type="FunCoup" id="Q1KKU6">
    <property type="interactions" value="304"/>
</dbReference>
<dbReference type="STRING" id="31033.ENSTRUP00000008079"/>
<dbReference type="GeneID" id="105419977"/>
<dbReference type="eggNOG" id="KOG0489">
    <property type="taxonomic scope" value="Eukaryota"/>
</dbReference>
<dbReference type="InParanoid" id="Q1KKU6"/>
<dbReference type="OrthoDB" id="6159439at2759"/>
<dbReference type="Proteomes" id="UP000005226">
    <property type="component" value="Unplaced"/>
</dbReference>
<dbReference type="GO" id="GO:0005654">
    <property type="term" value="C:nucleoplasm"/>
    <property type="evidence" value="ECO:0007669"/>
    <property type="project" value="TreeGrafter"/>
</dbReference>
<dbReference type="GO" id="GO:0000981">
    <property type="term" value="F:DNA-binding transcription factor activity, RNA polymerase II-specific"/>
    <property type="evidence" value="ECO:0007669"/>
    <property type="project" value="InterPro"/>
</dbReference>
<dbReference type="GO" id="GO:0000978">
    <property type="term" value="F:RNA polymerase II cis-regulatory region sequence-specific DNA binding"/>
    <property type="evidence" value="ECO:0007669"/>
    <property type="project" value="TreeGrafter"/>
</dbReference>
<dbReference type="GO" id="GO:0009952">
    <property type="term" value="P:anterior/posterior pattern specification"/>
    <property type="evidence" value="ECO:0007669"/>
    <property type="project" value="TreeGrafter"/>
</dbReference>
<dbReference type="GO" id="GO:0048704">
    <property type="term" value="P:embryonic skeletal system morphogenesis"/>
    <property type="evidence" value="ECO:0007669"/>
    <property type="project" value="TreeGrafter"/>
</dbReference>
<dbReference type="GO" id="GO:0045944">
    <property type="term" value="P:positive regulation of transcription by RNA polymerase II"/>
    <property type="evidence" value="ECO:0007669"/>
    <property type="project" value="TreeGrafter"/>
</dbReference>
<dbReference type="CDD" id="cd00086">
    <property type="entry name" value="homeodomain"/>
    <property type="match status" value="1"/>
</dbReference>
<dbReference type="FunFam" id="1.10.10.60:FF:000029">
    <property type="entry name" value="Homeobox protein Hox-D4"/>
    <property type="match status" value="1"/>
</dbReference>
<dbReference type="Gene3D" id="1.10.10.60">
    <property type="entry name" value="Homeodomain-like"/>
    <property type="match status" value="1"/>
</dbReference>
<dbReference type="InterPro" id="IPR050609">
    <property type="entry name" value="Antp_homeobox_Deformed_sf"/>
</dbReference>
<dbReference type="InterPro" id="IPR001356">
    <property type="entry name" value="HD"/>
</dbReference>
<dbReference type="InterPro" id="IPR020479">
    <property type="entry name" value="HD_metazoa"/>
</dbReference>
<dbReference type="InterPro" id="IPR017995">
    <property type="entry name" value="Homeobox_antennapedia"/>
</dbReference>
<dbReference type="InterPro" id="IPR001827">
    <property type="entry name" value="Homeobox_Antennapedia_CS"/>
</dbReference>
<dbReference type="InterPro" id="IPR017970">
    <property type="entry name" value="Homeobox_CS"/>
</dbReference>
<dbReference type="InterPro" id="IPR009057">
    <property type="entry name" value="Homeodomain-like_sf"/>
</dbReference>
<dbReference type="PANTHER" id="PTHR45771:SF9">
    <property type="entry name" value="HOMEOBOX PROTEIN HOX-C4"/>
    <property type="match status" value="1"/>
</dbReference>
<dbReference type="PANTHER" id="PTHR45771">
    <property type="entry name" value="HOMEOTIC PROTEIN DEFORMED"/>
    <property type="match status" value="1"/>
</dbReference>
<dbReference type="Pfam" id="PF00046">
    <property type="entry name" value="Homeodomain"/>
    <property type="match status" value="1"/>
</dbReference>
<dbReference type="PRINTS" id="PR00025">
    <property type="entry name" value="ANTENNAPEDIA"/>
</dbReference>
<dbReference type="PRINTS" id="PR00024">
    <property type="entry name" value="HOMEOBOX"/>
</dbReference>
<dbReference type="SMART" id="SM00389">
    <property type="entry name" value="HOX"/>
    <property type="match status" value="1"/>
</dbReference>
<dbReference type="SUPFAM" id="SSF46689">
    <property type="entry name" value="Homeodomain-like"/>
    <property type="match status" value="1"/>
</dbReference>
<dbReference type="PROSITE" id="PS00032">
    <property type="entry name" value="ANTENNAPEDIA"/>
    <property type="match status" value="1"/>
</dbReference>
<dbReference type="PROSITE" id="PS00027">
    <property type="entry name" value="HOMEOBOX_1"/>
    <property type="match status" value="1"/>
</dbReference>
<dbReference type="PROSITE" id="PS50071">
    <property type="entry name" value="HOMEOBOX_2"/>
    <property type="match status" value="1"/>
</dbReference>
<feature type="chain" id="PRO_0000265986" description="Homeobox protein Hox-C4a">
    <location>
        <begin position="1"/>
        <end position="264"/>
    </location>
</feature>
<feature type="DNA-binding region" description="Homeobox" evidence="2">
    <location>
        <begin position="155"/>
        <end position="214"/>
    </location>
</feature>
<feature type="region of interest" description="Disordered" evidence="3">
    <location>
        <begin position="68"/>
        <end position="131"/>
    </location>
</feature>
<feature type="region of interest" description="Disordered" evidence="3">
    <location>
        <begin position="213"/>
        <end position="264"/>
    </location>
</feature>
<feature type="short sequence motif" description="Antp-type hexapeptide">
    <location>
        <begin position="134"/>
        <end position="139"/>
    </location>
</feature>
<feature type="compositionally biased region" description="Low complexity" evidence="3">
    <location>
        <begin position="102"/>
        <end position="114"/>
    </location>
</feature>
<feature type="compositionally biased region" description="Polar residues" evidence="3">
    <location>
        <begin position="115"/>
        <end position="131"/>
    </location>
</feature>
<feature type="compositionally biased region" description="Low complexity" evidence="3">
    <location>
        <begin position="223"/>
        <end position="248"/>
    </location>
</feature>
<proteinExistence type="inferred from homology"/>
<reference key="1">
    <citation type="journal article" date="2006" name="Proc. Natl. Acad. Sci. U.S.A.">
        <title>Highly conserved syntenic blocks at the vertebrate Hox loci and conserved regulatory elements within and outside Hox gene clusters.</title>
        <authorList>
            <person name="Lee A.P."/>
            <person name="Koh E.G.L."/>
            <person name="Tay A."/>
            <person name="Brenner S."/>
            <person name="Venkatesh B."/>
        </authorList>
    </citation>
    <scope>NUCLEOTIDE SEQUENCE [GENOMIC DNA]</scope>
</reference>
<name>HXC4A_TAKRU</name>
<comment type="function">
    <text evidence="1">Sequence-specific transcription factor which is part of a developmental regulatory system that provides cells with specific positional identities on the anterior-posterior axis.</text>
</comment>
<comment type="subcellular location">
    <subcellularLocation>
        <location evidence="2">Nucleus</location>
    </subcellularLocation>
</comment>
<comment type="similarity">
    <text evidence="4">Belongs to the Antp homeobox family. Deformed subfamily.</text>
</comment>
<keyword id="KW-0217">Developmental protein</keyword>
<keyword id="KW-0238">DNA-binding</keyword>
<keyword id="KW-0371">Homeobox</keyword>
<keyword id="KW-0539">Nucleus</keyword>
<keyword id="KW-1185">Reference proteome</keyword>
<keyword id="KW-0804">Transcription</keyword>
<keyword id="KW-0805">Transcription regulation</keyword>
<sequence>MIMSSYLMESNYIDPKFPPCEEYSQNNYIPEHSPEYYSRARDTGYQHHHQELYPPRASYQERQYNCASIPEPDTPRGHGIPQSAHLLTGKGQPASCETPQLSMSPATPPAAASACNQATPEHPNSTASSKQPVVYPWMKKIHVSTVNSAYNGTEPKRSRTAYTRQQVLELEKEFHYNRYLTRRRRIEIAHALVLSERQIKIWFQNRRMKWKKDHRLPNTKVRSSSSSGSNTSSAAGAVAAASATNTGAPDELTGAQHAEDITRL</sequence>